<reference key="1">
    <citation type="submission" date="2006-12" db="EMBL/GenBank/DDBJ databases">
        <title>Complete sequence of Chlorobium phaeobacteroides DSM 266.</title>
        <authorList>
            <consortium name="US DOE Joint Genome Institute"/>
            <person name="Copeland A."/>
            <person name="Lucas S."/>
            <person name="Lapidus A."/>
            <person name="Barry K."/>
            <person name="Detter J.C."/>
            <person name="Glavina del Rio T."/>
            <person name="Hammon N."/>
            <person name="Israni S."/>
            <person name="Pitluck S."/>
            <person name="Goltsman E."/>
            <person name="Schmutz J."/>
            <person name="Larimer F."/>
            <person name="Land M."/>
            <person name="Hauser L."/>
            <person name="Mikhailova N."/>
            <person name="Li T."/>
            <person name="Overmann J."/>
            <person name="Bryant D.A."/>
            <person name="Richardson P."/>
        </authorList>
    </citation>
    <scope>NUCLEOTIDE SEQUENCE [LARGE SCALE GENOMIC DNA]</scope>
    <source>
        <strain>DSM 266 / SMG 266 / 2430</strain>
    </source>
</reference>
<keyword id="KW-0067">ATP-binding</keyword>
<keyword id="KW-0143">Chaperone</keyword>
<keyword id="KW-0963">Cytoplasm</keyword>
<keyword id="KW-0413">Isomerase</keyword>
<keyword id="KW-0547">Nucleotide-binding</keyword>
<keyword id="KW-1185">Reference proteome</keyword>
<comment type="function">
    <text evidence="1">Together with its co-chaperonin GroES, plays an essential role in assisting protein folding. The GroEL-GroES system forms a nano-cage that allows encapsulation of the non-native substrate proteins and provides a physical environment optimized to promote and accelerate protein folding.</text>
</comment>
<comment type="catalytic activity">
    <reaction evidence="1">
        <text>ATP + H2O + a folded polypeptide = ADP + phosphate + an unfolded polypeptide.</text>
        <dbReference type="EC" id="5.6.1.7"/>
    </reaction>
</comment>
<comment type="subunit">
    <text evidence="1">Forms a cylinder of 14 subunits composed of two heptameric rings stacked back-to-back. Interacts with the co-chaperonin GroES.</text>
</comment>
<comment type="subcellular location">
    <subcellularLocation>
        <location evidence="1">Cytoplasm</location>
    </subcellularLocation>
</comment>
<comment type="similarity">
    <text evidence="1">Belongs to the chaperonin (HSP60) family.</text>
</comment>
<evidence type="ECO:0000255" key="1">
    <source>
        <dbReference type="HAMAP-Rule" id="MF_00600"/>
    </source>
</evidence>
<dbReference type="EC" id="5.6.1.7" evidence="1"/>
<dbReference type="EMBL" id="CP000492">
    <property type="protein sequence ID" value="ABL65952.1"/>
    <property type="molecule type" value="Genomic_DNA"/>
</dbReference>
<dbReference type="RefSeq" id="WP_011745758.1">
    <property type="nucleotide sequence ID" value="NC_008639.1"/>
</dbReference>
<dbReference type="SMR" id="A1BHS5"/>
<dbReference type="STRING" id="290317.Cpha266_1936"/>
<dbReference type="KEGG" id="cph:Cpha266_1936"/>
<dbReference type="eggNOG" id="COG0459">
    <property type="taxonomic scope" value="Bacteria"/>
</dbReference>
<dbReference type="HOGENOM" id="CLU_016503_3_0_10"/>
<dbReference type="OrthoDB" id="9766614at2"/>
<dbReference type="Proteomes" id="UP000008701">
    <property type="component" value="Chromosome"/>
</dbReference>
<dbReference type="GO" id="GO:0005737">
    <property type="term" value="C:cytoplasm"/>
    <property type="evidence" value="ECO:0007669"/>
    <property type="project" value="UniProtKB-SubCell"/>
</dbReference>
<dbReference type="GO" id="GO:0005524">
    <property type="term" value="F:ATP binding"/>
    <property type="evidence" value="ECO:0007669"/>
    <property type="project" value="UniProtKB-UniRule"/>
</dbReference>
<dbReference type="GO" id="GO:0140662">
    <property type="term" value="F:ATP-dependent protein folding chaperone"/>
    <property type="evidence" value="ECO:0007669"/>
    <property type="project" value="InterPro"/>
</dbReference>
<dbReference type="GO" id="GO:0016853">
    <property type="term" value="F:isomerase activity"/>
    <property type="evidence" value="ECO:0007669"/>
    <property type="project" value="UniProtKB-KW"/>
</dbReference>
<dbReference type="GO" id="GO:0051082">
    <property type="term" value="F:unfolded protein binding"/>
    <property type="evidence" value="ECO:0007669"/>
    <property type="project" value="UniProtKB-UniRule"/>
</dbReference>
<dbReference type="GO" id="GO:0042026">
    <property type="term" value="P:protein refolding"/>
    <property type="evidence" value="ECO:0007669"/>
    <property type="project" value="UniProtKB-UniRule"/>
</dbReference>
<dbReference type="CDD" id="cd03344">
    <property type="entry name" value="GroEL"/>
    <property type="match status" value="1"/>
</dbReference>
<dbReference type="FunFam" id="3.50.7.10:FF:000001">
    <property type="entry name" value="60 kDa chaperonin"/>
    <property type="match status" value="1"/>
</dbReference>
<dbReference type="Gene3D" id="3.50.7.10">
    <property type="entry name" value="GroEL"/>
    <property type="match status" value="1"/>
</dbReference>
<dbReference type="Gene3D" id="1.10.560.10">
    <property type="entry name" value="GroEL-like equatorial domain"/>
    <property type="match status" value="1"/>
</dbReference>
<dbReference type="Gene3D" id="3.30.260.10">
    <property type="entry name" value="TCP-1-like chaperonin intermediate domain"/>
    <property type="match status" value="1"/>
</dbReference>
<dbReference type="HAMAP" id="MF_00600">
    <property type="entry name" value="CH60"/>
    <property type="match status" value="1"/>
</dbReference>
<dbReference type="InterPro" id="IPR018370">
    <property type="entry name" value="Chaperonin_Cpn60_CS"/>
</dbReference>
<dbReference type="InterPro" id="IPR001844">
    <property type="entry name" value="Cpn60/GroEL"/>
</dbReference>
<dbReference type="InterPro" id="IPR002423">
    <property type="entry name" value="Cpn60/GroEL/TCP-1"/>
</dbReference>
<dbReference type="InterPro" id="IPR027409">
    <property type="entry name" value="GroEL-like_apical_dom_sf"/>
</dbReference>
<dbReference type="InterPro" id="IPR027413">
    <property type="entry name" value="GROEL-like_equatorial_sf"/>
</dbReference>
<dbReference type="InterPro" id="IPR027410">
    <property type="entry name" value="TCP-1-like_intermed_sf"/>
</dbReference>
<dbReference type="NCBIfam" id="TIGR02348">
    <property type="entry name" value="GroEL"/>
    <property type="match status" value="1"/>
</dbReference>
<dbReference type="NCBIfam" id="NF000592">
    <property type="entry name" value="PRK00013.1"/>
    <property type="match status" value="1"/>
</dbReference>
<dbReference type="NCBIfam" id="NF009487">
    <property type="entry name" value="PRK12849.1"/>
    <property type="match status" value="1"/>
</dbReference>
<dbReference type="NCBIfam" id="NF009488">
    <property type="entry name" value="PRK12850.1"/>
    <property type="match status" value="1"/>
</dbReference>
<dbReference type="NCBIfam" id="NF009489">
    <property type="entry name" value="PRK12851.1"/>
    <property type="match status" value="1"/>
</dbReference>
<dbReference type="PANTHER" id="PTHR45633">
    <property type="entry name" value="60 KDA HEAT SHOCK PROTEIN, MITOCHONDRIAL"/>
    <property type="match status" value="1"/>
</dbReference>
<dbReference type="Pfam" id="PF00118">
    <property type="entry name" value="Cpn60_TCP1"/>
    <property type="match status" value="1"/>
</dbReference>
<dbReference type="PRINTS" id="PR00298">
    <property type="entry name" value="CHAPERONIN60"/>
</dbReference>
<dbReference type="SUPFAM" id="SSF52029">
    <property type="entry name" value="GroEL apical domain-like"/>
    <property type="match status" value="1"/>
</dbReference>
<dbReference type="SUPFAM" id="SSF48592">
    <property type="entry name" value="GroEL equatorial domain-like"/>
    <property type="match status" value="1"/>
</dbReference>
<dbReference type="SUPFAM" id="SSF54849">
    <property type="entry name" value="GroEL-intermediate domain like"/>
    <property type="match status" value="1"/>
</dbReference>
<dbReference type="PROSITE" id="PS00296">
    <property type="entry name" value="CHAPERONINS_CPN60"/>
    <property type="match status" value="1"/>
</dbReference>
<gene>
    <name evidence="1" type="primary">groEL</name>
    <name evidence="1" type="synonym">groL</name>
    <name type="ordered locus">Cpha266_1936</name>
</gene>
<sequence length="547" mass="58322">MTAKDIIFDSDARAKLKVGVDKLANAVKVTLGPAGRNVLIDKKFGAPTSTKDGVTVAKEIELADAVENMGAQMVREVASKTSDVAGDGTTTATVLAQAIYREGLKNVAAGARPIDLKRGIDRAVKEVVLELRNISRSISGKKEIAQVGTISANNDPEIGELIAEAMDKVGKDGVITVEEAKGMDTELKVVEGMQFDRGYLSPYFVTNPENMEAELEDPLILIHDKKISNMKELLPILEKSAQSGRPLLIISEDIEGEALATLVVNRLRGTLKVCAVKAPGFGDRRKAMLEDIAILTGGTVISEEKGYKLENATLTYLGQAGRITVDKDNTTVVEGKGKPEEIKARINEIKGQIEKSTSDYDTEKLQERLAKLSGGVAVLNIGASTEVEMKEKKARVEDALHATRAAVQEGIVVGGGVALIRAIKGLDNAVADNEDQKTGIEIIRRALEEPLRQIVANTGTTDGAVVLEKVKNGEGDFGFNARTEQYENLVEAGVVDPTKVTRSALENAASVASILLTTEAAITDIKEEKSDMPAMPPGGMGGMGGMY</sequence>
<accession>A1BHS5</accession>
<feature type="chain" id="PRO_1000025769" description="Chaperonin GroEL">
    <location>
        <begin position="1"/>
        <end position="547"/>
    </location>
</feature>
<feature type="binding site" evidence="1">
    <location>
        <begin position="30"/>
        <end position="33"/>
    </location>
    <ligand>
        <name>ATP</name>
        <dbReference type="ChEBI" id="CHEBI:30616"/>
    </ligand>
</feature>
<feature type="binding site" evidence="1">
    <location>
        <position position="51"/>
    </location>
    <ligand>
        <name>ATP</name>
        <dbReference type="ChEBI" id="CHEBI:30616"/>
    </ligand>
</feature>
<feature type="binding site" evidence="1">
    <location>
        <begin position="87"/>
        <end position="91"/>
    </location>
    <ligand>
        <name>ATP</name>
        <dbReference type="ChEBI" id="CHEBI:30616"/>
    </ligand>
</feature>
<feature type="binding site" evidence="1">
    <location>
        <position position="415"/>
    </location>
    <ligand>
        <name>ATP</name>
        <dbReference type="ChEBI" id="CHEBI:30616"/>
    </ligand>
</feature>
<feature type="binding site" evidence="1">
    <location>
        <position position="496"/>
    </location>
    <ligand>
        <name>ATP</name>
        <dbReference type="ChEBI" id="CHEBI:30616"/>
    </ligand>
</feature>
<name>CH60_CHLPD</name>
<organism>
    <name type="scientific">Chlorobium phaeobacteroides (strain DSM 266 / SMG 266 / 2430)</name>
    <dbReference type="NCBI Taxonomy" id="290317"/>
    <lineage>
        <taxon>Bacteria</taxon>
        <taxon>Pseudomonadati</taxon>
        <taxon>Chlorobiota</taxon>
        <taxon>Chlorobiia</taxon>
        <taxon>Chlorobiales</taxon>
        <taxon>Chlorobiaceae</taxon>
        <taxon>Chlorobium/Pelodictyon group</taxon>
        <taxon>Chlorobium</taxon>
    </lineage>
</organism>
<protein>
    <recommendedName>
        <fullName evidence="1">Chaperonin GroEL</fullName>
        <ecNumber evidence="1">5.6.1.7</ecNumber>
    </recommendedName>
    <alternativeName>
        <fullName evidence="1">60 kDa chaperonin</fullName>
    </alternativeName>
    <alternativeName>
        <fullName evidence="1">Chaperonin-60</fullName>
        <shortName evidence="1">Cpn60</shortName>
    </alternativeName>
</protein>
<proteinExistence type="inferred from homology"/>